<keyword id="KW-0445">Lipid transport</keyword>
<keyword id="KW-1185">Reference proteome</keyword>
<keyword id="KW-0732">Signal</keyword>
<keyword id="KW-0813">Transport</keyword>
<name>NPC2_KLULA</name>
<accession>Q6CNE0</accession>
<comment type="function">
    <text evidence="1">Catalyzes the intermembrane transfer of phosphatidylglycerol and phosphatidylinositol.</text>
</comment>
<comment type="subunit">
    <text evidence="1">Monomer.</text>
</comment>
<comment type="similarity">
    <text evidence="3">Belongs to the NPC2 family.</text>
</comment>
<sequence length="173" mass="18816">MRFSVVTSYLLCAAASYANAASLFGLSFPEPPSANKPIPGDSPLLQCDVDQSQSLDVTQVNLVPNPPQRGENLTIAAAGVLQTTIEEGAYIDIEVRLGYIKLISQTYDLCEQLEENDIDGLKCPIEEGVYELNKIVEIPSEVPPGKYSVIARAYNVDDEQITCLTGEVIFPAY</sequence>
<dbReference type="EMBL" id="CR382125">
    <property type="protein sequence ID" value="CAG99636.1"/>
    <property type="molecule type" value="Genomic_DNA"/>
</dbReference>
<dbReference type="RefSeq" id="XP_454549.1">
    <property type="nucleotide sequence ID" value="XM_454549.1"/>
</dbReference>
<dbReference type="SMR" id="Q6CNE0"/>
<dbReference type="FunCoup" id="Q6CNE0">
    <property type="interactions" value="120"/>
</dbReference>
<dbReference type="STRING" id="284590.Q6CNE0"/>
<dbReference type="PaxDb" id="284590-Q6CNE0"/>
<dbReference type="KEGG" id="kla:KLLA0_E13311g"/>
<dbReference type="eggNOG" id="KOG4680">
    <property type="taxonomic scope" value="Eukaryota"/>
</dbReference>
<dbReference type="HOGENOM" id="CLU_097982_0_1_1"/>
<dbReference type="InParanoid" id="Q6CNE0"/>
<dbReference type="OMA" id="HQTYDLC"/>
<dbReference type="Proteomes" id="UP000000598">
    <property type="component" value="Chromosome E"/>
</dbReference>
<dbReference type="GO" id="GO:0032934">
    <property type="term" value="F:sterol binding"/>
    <property type="evidence" value="ECO:0007669"/>
    <property type="project" value="InterPro"/>
</dbReference>
<dbReference type="GO" id="GO:0032366">
    <property type="term" value="P:intracellular sterol transport"/>
    <property type="evidence" value="ECO:0007669"/>
    <property type="project" value="InterPro"/>
</dbReference>
<dbReference type="CDD" id="cd00917">
    <property type="entry name" value="PG-PI_TP"/>
    <property type="match status" value="1"/>
</dbReference>
<dbReference type="Gene3D" id="2.60.40.770">
    <property type="match status" value="1"/>
</dbReference>
<dbReference type="InterPro" id="IPR014756">
    <property type="entry name" value="Ig_E-set"/>
</dbReference>
<dbReference type="InterPro" id="IPR003172">
    <property type="entry name" value="ML_dom"/>
</dbReference>
<dbReference type="InterPro" id="IPR033917">
    <property type="entry name" value="ML_PG-PI_TP"/>
</dbReference>
<dbReference type="InterPro" id="IPR039670">
    <property type="entry name" value="NPC2-like"/>
</dbReference>
<dbReference type="PANTHER" id="PTHR11306">
    <property type="entry name" value="NIEMANN PICK TYPE C2 PROTEIN NPC2-RELATED"/>
    <property type="match status" value="1"/>
</dbReference>
<dbReference type="PANTHER" id="PTHR11306:SF0">
    <property type="entry name" value="PHOSPHATIDYLGLYCEROL_PHOSPHATIDYLINOSITOL TRANSFER PROTEIN"/>
    <property type="match status" value="1"/>
</dbReference>
<dbReference type="Pfam" id="PF02221">
    <property type="entry name" value="E1_DerP2_DerF2"/>
    <property type="match status" value="1"/>
</dbReference>
<dbReference type="SMART" id="SM00737">
    <property type="entry name" value="ML"/>
    <property type="match status" value="1"/>
</dbReference>
<dbReference type="SUPFAM" id="SSF81296">
    <property type="entry name" value="E set domains"/>
    <property type="match status" value="1"/>
</dbReference>
<reference key="1">
    <citation type="journal article" date="2004" name="Nature">
        <title>Genome evolution in yeasts.</title>
        <authorList>
            <person name="Dujon B."/>
            <person name="Sherman D."/>
            <person name="Fischer G."/>
            <person name="Durrens P."/>
            <person name="Casaregola S."/>
            <person name="Lafontaine I."/>
            <person name="de Montigny J."/>
            <person name="Marck C."/>
            <person name="Neuveglise C."/>
            <person name="Talla E."/>
            <person name="Goffard N."/>
            <person name="Frangeul L."/>
            <person name="Aigle M."/>
            <person name="Anthouard V."/>
            <person name="Babour A."/>
            <person name="Barbe V."/>
            <person name="Barnay S."/>
            <person name="Blanchin S."/>
            <person name="Beckerich J.-M."/>
            <person name="Beyne E."/>
            <person name="Bleykasten C."/>
            <person name="Boisrame A."/>
            <person name="Boyer J."/>
            <person name="Cattolico L."/>
            <person name="Confanioleri F."/>
            <person name="de Daruvar A."/>
            <person name="Despons L."/>
            <person name="Fabre E."/>
            <person name="Fairhead C."/>
            <person name="Ferry-Dumazet H."/>
            <person name="Groppi A."/>
            <person name="Hantraye F."/>
            <person name="Hennequin C."/>
            <person name="Jauniaux N."/>
            <person name="Joyet P."/>
            <person name="Kachouri R."/>
            <person name="Kerrest A."/>
            <person name="Koszul R."/>
            <person name="Lemaire M."/>
            <person name="Lesur I."/>
            <person name="Ma L."/>
            <person name="Muller H."/>
            <person name="Nicaud J.-M."/>
            <person name="Nikolski M."/>
            <person name="Oztas S."/>
            <person name="Ozier-Kalogeropoulos O."/>
            <person name="Pellenz S."/>
            <person name="Potier S."/>
            <person name="Richard G.-F."/>
            <person name="Straub M.-L."/>
            <person name="Suleau A."/>
            <person name="Swennen D."/>
            <person name="Tekaia F."/>
            <person name="Wesolowski-Louvel M."/>
            <person name="Westhof E."/>
            <person name="Wirth B."/>
            <person name="Zeniou-Meyer M."/>
            <person name="Zivanovic Y."/>
            <person name="Bolotin-Fukuhara M."/>
            <person name="Thierry A."/>
            <person name="Bouchier C."/>
            <person name="Caudron B."/>
            <person name="Scarpelli C."/>
            <person name="Gaillardin C."/>
            <person name="Weissenbach J."/>
            <person name="Wincker P."/>
            <person name="Souciet J.-L."/>
        </authorList>
    </citation>
    <scope>NUCLEOTIDE SEQUENCE [LARGE SCALE GENOMIC DNA]</scope>
    <source>
        <strain>ATCC 8585 / CBS 2359 / DSM 70799 / NBRC 1267 / NRRL Y-1140 / WM37</strain>
    </source>
</reference>
<gene>
    <name type="primary">NPC2</name>
    <name type="ordered locus">KLLA0E13321g</name>
</gene>
<organism>
    <name type="scientific">Kluyveromyces lactis (strain ATCC 8585 / CBS 2359 / DSM 70799 / NBRC 1267 / NRRL Y-1140 / WM37)</name>
    <name type="common">Yeast</name>
    <name type="synonym">Candida sphaerica</name>
    <dbReference type="NCBI Taxonomy" id="284590"/>
    <lineage>
        <taxon>Eukaryota</taxon>
        <taxon>Fungi</taxon>
        <taxon>Dikarya</taxon>
        <taxon>Ascomycota</taxon>
        <taxon>Saccharomycotina</taxon>
        <taxon>Saccharomycetes</taxon>
        <taxon>Saccharomycetales</taxon>
        <taxon>Saccharomycetaceae</taxon>
        <taxon>Kluyveromyces</taxon>
    </lineage>
</organism>
<protein>
    <recommendedName>
        <fullName>Phosphatidylglycerol/phosphatidylinositol transfer protein</fullName>
        <shortName>PG/PI-TP</shortName>
    </recommendedName>
</protein>
<proteinExistence type="inferred from homology"/>
<feature type="signal peptide" evidence="2">
    <location>
        <begin position="1"/>
        <end position="20"/>
    </location>
</feature>
<feature type="propeptide" id="PRO_0000019885" evidence="1">
    <location>
        <begin position="21"/>
        <end position="34"/>
    </location>
</feature>
<feature type="chain" id="PRO_0000019886" description="Phosphatidylglycerol/phosphatidylinositol transfer protein">
    <location>
        <begin position="35"/>
        <end position="173"/>
    </location>
</feature>
<evidence type="ECO:0000250" key="1"/>
<evidence type="ECO:0000255" key="2"/>
<evidence type="ECO:0000305" key="3"/>